<protein>
    <recommendedName>
        <fullName>Zinc finger A20 and AN1 domain-containing stress-associated protein 3</fullName>
        <shortName>AtSAP3</shortName>
    </recommendedName>
</protein>
<organism>
    <name type="scientific">Arabidopsis thaliana</name>
    <name type="common">Mouse-ear cress</name>
    <dbReference type="NCBI Taxonomy" id="3702"/>
    <lineage>
        <taxon>Eukaryota</taxon>
        <taxon>Viridiplantae</taxon>
        <taxon>Streptophyta</taxon>
        <taxon>Embryophyta</taxon>
        <taxon>Tracheophyta</taxon>
        <taxon>Spermatophyta</taxon>
        <taxon>Magnoliopsida</taxon>
        <taxon>eudicotyledons</taxon>
        <taxon>Gunneridae</taxon>
        <taxon>Pentapetalae</taxon>
        <taxon>rosids</taxon>
        <taxon>malvids</taxon>
        <taxon>Brassicales</taxon>
        <taxon>Brassicaceae</taxon>
        <taxon>Camelineae</taxon>
        <taxon>Arabidopsis</taxon>
    </lineage>
</organism>
<feature type="chain" id="PRO_0000269856" description="Zinc finger A20 and AN1 domain-containing stress-associated protein 3">
    <location>
        <begin position="1"/>
        <end position="163"/>
    </location>
</feature>
<feature type="zinc finger region" description="A20-type" evidence="3">
    <location>
        <begin position="7"/>
        <end position="41"/>
    </location>
</feature>
<feature type="zinc finger region" description="AN1-type" evidence="2">
    <location>
        <begin position="98"/>
        <end position="144"/>
    </location>
</feature>
<feature type="region of interest" description="Disordered" evidence="4">
    <location>
        <begin position="57"/>
        <end position="101"/>
    </location>
</feature>
<feature type="compositionally biased region" description="Basic and acidic residues" evidence="4">
    <location>
        <begin position="74"/>
        <end position="89"/>
    </location>
</feature>
<feature type="binding site" evidence="3">
    <location>
        <position position="13"/>
    </location>
    <ligand>
        <name>Zn(2+)</name>
        <dbReference type="ChEBI" id="CHEBI:29105"/>
        <label>1</label>
    </ligand>
</feature>
<feature type="binding site" evidence="3">
    <location>
        <position position="17"/>
    </location>
    <ligand>
        <name>Zn(2+)</name>
        <dbReference type="ChEBI" id="CHEBI:29105"/>
        <label>1</label>
    </ligand>
</feature>
<feature type="binding site" evidence="3">
    <location>
        <position position="29"/>
    </location>
    <ligand>
        <name>Zn(2+)</name>
        <dbReference type="ChEBI" id="CHEBI:29105"/>
        <label>1</label>
    </ligand>
</feature>
<feature type="binding site" evidence="3">
    <location>
        <position position="32"/>
    </location>
    <ligand>
        <name>Zn(2+)</name>
        <dbReference type="ChEBI" id="CHEBI:29105"/>
        <label>1</label>
    </ligand>
</feature>
<feature type="binding site" evidence="2">
    <location>
        <position position="104"/>
    </location>
    <ligand>
        <name>Zn(2+)</name>
        <dbReference type="ChEBI" id="CHEBI:29105"/>
        <label>2</label>
    </ligand>
</feature>
<feature type="binding site" evidence="2">
    <location>
        <position position="107"/>
    </location>
    <ligand>
        <name>Zn(2+)</name>
        <dbReference type="ChEBI" id="CHEBI:29105"/>
        <label>2</label>
    </ligand>
</feature>
<feature type="binding site" evidence="2">
    <location>
        <position position="118"/>
    </location>
    <ligand>
        <name>Zn(2+)</name>
        <dbReference type="ChEBI" id="CHEBI:29105"/>
        <label>3</label>
    </ligand>
</feature>
<feature type="binding site" evidence="2">
    <location>
        <position position="120"/>
    </location>
    <ligand>
        <name>Zn(2+)</name>
        <dbReference type="ChEBI" id="CHEBI:29105"/>
        <label>3</label>
    </ligand>
</feature>
<feature type="binding site" evidence="2">
    <location>
        <position position="125"/>
    </location>
    <ligand>
        <name>Zn(2+)</name>
        <dbReference type="ChEBI" id="CHEBI:29105"/>
        <label>2</label>
    </ligand>
</feature>
<feature type="binding site" evidence="2">
    <location>
        <position position="128"/>
    </location>
    <ligand>
        <name>Zn(2+)</name>
        <dbReference type="ChEBI" id="CHEBI:29105"/>
        <label>2</label>
    </ligand>
</feature>
<feature type="binding site" evidence="2">
    <location>
        <position position="134"/>
    </location>
    <ligand>
        <name>Zn(2+)</name>
        <dbReference type="ChEBI" id="CHEBI:29105"/>
        <label>3</label>
    </ligand>
</feature>
<feature type="binding site" evidence="2">
    <location>
        <position position="136"/>
    </location>
    <ligand>
        <name>Zn(2+)</name>
        <dbReference type="ChEBI" id="CHEBI:29105"/>
        <label>3</label>
    </ligand>
</feature>
<proteinExistence type="evidence at transcript level"/>
<reference key="1">
    <citation type="journal article" date="1999" name="Nature">
        <title>Sequence and analysis of chromosome 2 of the plant Arabidopsis thaliana.</title>
        <authorList>
            <person name="Lin X."/>
            <person name="Kaul S."/>
            <person name="Rounsley S.D."/>
            <person name="Shea T.P."/>
            <person name="Benito M.-I."/>
            <person name="Town C.D."/>
            <person name="Fujii C.Y."/>
            <person name="Mason T.M."/>
            <person name="Bowman C.L."/>
            <person name="Barnstead M.E."/>
            <person name="Feldblyum T.V."/>
            <person name="Buell C.R."/>
            <person name="Ketchum K.A."/>
            <person name="Lee J.J."/>
            <person name="Ronning C.M."/>
            <person name="Koo H.L."/>
            <person name="Moffat K.S."/>
            <person name="Cronin L.A."/>
            <person name="Shen M."/>
            <person name="Pai G."/>
            <person name="Van Aken S."/>
            <person name="Umayam L."/>
            <person name="Tallon L.J."/>
            <person name="Gill J.E."/>
            <person name="Adams M.D."/>
            <person name="Carrera A.J."/>
            <person name="Creasy T.H."/>
            <person name="Goodman H.M."/>
            <person name="Somerville C.R."/>
            <person name="Copenhaver G.P."/>
            <person name="Preuss D."/>
            <person name="Nierman W.C."/>
            <person name="White O."/>
            <person name="Eisen J.A."/>
            <person name="Salzberg S.L."/>
            <person name="Fraser C.M."/>
            <person name="Venter J.C."/>
        </authorList>
    </citation>
    <scope>NUCLEOTIDE SEQUENCE [LARGE SCALE GENOMIC DNA]</scope>
    <source>
        <strain>cv. Columbia</strain>
    </source>
</reference>
<reference key="2">
    <citation type="journal article" date="2017" name="Plant J.">
        <title>Araport11: a complete reannotation of the Arabidopsis thaliana reference genome.</title>
        <authorList>
            <person name="Cheng C.Y."/>
            <person name="Krishnakumar V."/>
            <person name="Chan A.P."/>
            <person name="Thibaud-Nissen F."/>
            <person name="Schobel S."/>
            <person name="Town C.D."/>
        </authorList>
    </citation>
    <scope>GENOME REANNOTATION</scope>
    <source>
        <strain>cv. Columbia</strain>
    </source>
</reference>
<reference key="3">
    <citation type="journal article" date="2003" name="Science">
        <title>Empirical analysis of transcriptional activity in the Arabidopsis genome.</title>
        <authorList>
            <person name="Yamada K."/>
            <person name="Lim J."/>
            <person name="Dale J.M."/>
            <person name="Chen H."/>
            <person name="Shinn P."/>
            <person name="Palm C.J."/>
            <person name="Southwick A.M."/>
            <person name="Wu H.C."/>
            <person name="Kim C.J."/>
            <person name="Nguyen M."/>
            <person name="Pham P.K."/>
            <person name="Cheuk R.F."/>
            <person name="Karlin-Newmann G."/>
            <person name="Liu S.X."/>
            <person name="Lam B."/>
            <person name="Sakano H."/>
            <person name="Wu T."/>
            <person name="Yu G."/>
            <person name="Miranda M."/>
            <person name="Quach H.L."/>
            <person name="Tripp M."/>
            <person name="Chang C.H."/>
            <person name="Lee J.M."/>
            <person name="Toriumi M.J."/>
            <person name="Chan M.M."/>
            <person name="Tang C.C."/>
            <person name="Onodera C.S."/>
            <person name="Deng J.M."/>
            <person name="Akiyama K."/>
            <person name="Ansari Y."/>
            <person name="Arakawa T."/>
            <person name="Banh J."/>
            <person name="Banno F."/>
            <person name="Bowser L."/>
            <person name="Brooks S.Y."/>
            <person name="Carninci P."/>
            <person name="Chao Q."/>
            <person name="Choy N."/>
            <person name="Enju A."/>
            <person name="Goldsmith A.D."/>
            <person name="Gurjal M."/>
            <person name="Hansen N.F."/>
            <person name="Hayashizaki Y."/>
            <person name="Johnson-Hopson C."/>
            <person name="Hsuan V.W."/>
            <person name="Iida K."/>
            <person name="Karnes M."/>
            <person name="Khan S."/>
            <person name="Koesema E."/>
            <person name="Ishida J."/>
            <person name="Jiang P.X."/>
            <person name="Jones T."/>
            <person name="Kawai J."/>
            <person name="Kamiya A."/>
            <person name="Meyers C."/>
            <person name="Nakajima M."/>
            <person name="Narusaka M."/>
            <person name="Seki M."/>
            <person name="Sakurai T."/>
            <person name="Satou M."/>
            <person name="Tamse R."/>
            <person name="Vaysberg M."/>
            <person name="Wallender E.K."/>
            <person name="Wong C."/>
            <person name="Yamamura Y."/>
            <person name="Yuan S."/>
            <person name="Shinozaki K."/>
            <person name="Davis R.W."/>
            <person name="Theologis A."/>
            <person name="Ecker J.R."/>
        </authorList>
    </citation>
    <scope>NUCLEOTIDE SEQUENCE [LARGE SCALE MRNA]</scope>
    <source>
        <strain>cv. Columbia</strain>
    </source>
</reference>
<reference key="4">
    <citation type="submission" date="2002-03" db="EMBL/GenBank/DDBJ databases">
        <title>Full-length cDNA from Arabidopsis thaliana.</title>
        <authorList>
            <person name="Brover V.V."/>
            <person name="Troukhan M.E."/>
            <person name="Alexandrov N.A."/>
            <person name="Lu Y.-P."/>
            <person name="Flavell R.B."/>
            <person name="Feldmann K.A."/>
        </authorList>
    </citation>
    <scope>NUCLEOTIDE SEQUENCE [LARGE SCALE MRNA]</scope>
</reference>
<reference key="5">
    <citation type="journal article" date="2006" name="Mol. Genet. Genomics">
        <title>Genome-wide analysis of the stress associated protein (SAP) gene family containing A20/AN1 zinc-finger(s) in rice and their phylogenetic relationship with Arabidopsis.</title>
        <authorList>
            <person name="Vij S."/>
            <person name="Tyagi A.K."/>
        </authorList>
    </citation>
    <scope>GENE FAMILY</scope>
</reference>
<sequence>MAEEHRLQEPRLCANNCGFFGSTATQNLCSKCFRDLQHQEQNSSTAKHALTQSLAAVGAAASSSVSPPPPPPADSKEIVEAKSEKRAAAEPEEADGPPQDPKRCLTCRRRVGITGFRCRCGFVFCGTHRYAEQHECSFDFKRMGKDKIAKANPIVKADKLEKI</sequence>
<name>SAP3_ARATH</name>
<dbReference type="EMBL" id="AC005824">
    <property type="protein sequence ID" value="AAC73042.1"/>
    <property type="molecule type" value="Genomic_DNA"/>
</dbReference>
<dbReference type="EMBL" id="AC006232">
    <property type="protein sequence ID" value="AAM15188.1"/>
    <property type="molecule type" value="Genomic_DNA"/>
</dbReference>
<dbReference type="EMBL" id="CP002685">
    <property type="protein sequence ID" value="AEC08016.1"/>
    <property type="molecule type" value="Genomic_DNA"/>
</dbReference>
<dbReference type="EMBL" id="CP002685">
    <property type="protein sequence ID" value="AEC08017.1"/>
    <property type="molecule type" value="Genomic_DNA"/>
</dbReference>
<dbReference type="EMBL" id="AY072454">
    <property type="protein sequence ID" value="AAL62446.1"/>
    <property type="molecule type" value="mRNA"/>
</dbReference>
<dbReference type="EMBL" id="BT000341">
    <property type="protein sequence ID" value="AAN15660.1"/>
    <property type="molecule type" value="mRNA"/>
</dbReference>
<dbReference type="EMBL" id="AY085258">
    <property type="protein sequence ID" value="AAM62490.1"/>
    <property type="molecule type" value="mRNA"/>
</dbReference>
<dbReference type="PIR" id="D84674">
    <property type="entry name" value="D84674"/>
</dbReference>
<dbReference type="RefSeq" id="NP_001189620.1">
    <property type="nucleotide sequence ID" value="NM_001202691.1"/>
</dbReference>
<dbReference type="RefSeq" id="NP_180326.1">
    <property type="nucleotide sequence ID" value="NM_128317.5"/>
</dbReference>
<dbReference type="SMR" id="Q9ZNU9"/>
<dbReference type="BioGRID" id="2656">
    <property type="interactions" value="5"/>
</dbReference>
<dbReference type="FunCoup" id="Q9ZNU9">
    <property type="interactions" value="2126"/>
</dbReference>
<dbReference type="IntAct" id="Q9ZNU9">
    <property type="interactions" value="5"/>
</dbReference>
<dbReference type="STRING" id="3702.Q9ZNU9"/>
<dbReference type="PaxDb" id="3702-AT2G27580.1"/>
<dbReference type="ProteomicsDB" id="232758"/>
<dbReference type="EnsemblPlants" id="AT2G27580.1">
    <property type="protein sequence ID" value="AT2G27580.1"/>
    <property type="gene ID" value="AT2G27580"/>
</dbReference>
<dbReference type="EnsemblPlants" id="AT2G27580.2">
    <property type="protein sequence ID" value="AT2G27580.2"/>
    <property type="gene ID" value="AT2G27580"/>
</dbReference>
<dbReference type="GeneID" id="817304"/>
<dbReference type="Gramene" id="AT2G27580.1">
    <property type="protein sequence ID" value="AT2G27580.1"/>
    <property type="gene ID" value="AT2G27580"/>
</dbReference>
<dbReference type="Gramene" id="AT2G27580.2">
    <property type="protein sequence ID" value="AT2G27580.2"/>
    <property type="gene ID" value="AT2G27580"/>
</dbReference>
<dbReference type="KEGG" id="ath:AT2G27580"/>
<dbReference type="Araport" id="AT2G27580"/>
<dbReference type="TAIR" id="AT2G27580">
    <property type="gene designation" value="SAP3"/>
</dbReference>
<dbReference type="eggNOG" id="KOG3173">
    <property type="taxonomic scope" value="Eukaryota"/>
</dbReference>
<dbReference type="HOGENOM" id="CLU_057016_5_3_1"/>
<dbReference type="InParanoid" id="Q9ZNU9"/>
<dbReference type="OMA" id="APQQNRC"/>
<dbReference type="OrthoDB" id="428577at2759"/>
<dbReference type="PhylomeDB" id="Q9ZNU9"/>
<dbReference type="PRO" id="PR:Q9ZNU9"/>
<dbReference type="Proteomes" id="UP000006548">
    <property type="component" value="Chromosome 2"/>
</dbReference>
<dbReference type="ExpressionAtlas" id="Q9ZNU9">
    <property type="expression patterns" value="baseline and differential"/>
</dbReference>
<dbReference type="GO" id="GO:0003677">
    <property type="term" value="F:DNA binding"/>
    <property type="evidence" value="ECO:0007669"/>
    <property type="project" value="InterPro"/>
</dbReference>
<dbReference type="GO" id="GO:0008270">
    <property type="term" value="F:zinc ion binding"/>
    <property type="evidence" value="ECO:0007669"/>
    <property type="project" value="UniProtKB-KW"/>
</dbReference>
<dbReference type="GO" id="GO:0009408">
    <property type="term" value="P:response to heat"/>
    <property type="evidence" value="ECO:0000270"/>
    <property type="project" value="TAIR"/>
</dbReference>
<dbReference type="FunFam" id="4.10.1110.10:FF:000001">
    <property type="entry name" value="Zinc finger AN1-type containing 6"/>
    <property type="match status" value="1"/>
</dbReference>
<dbReference type="Gene3D" id="1.20.5.4770">
    <property type="match status" value="1"/>
</dbReference>
<dbReference type="Gene3D" id="4.10.1110.10">
    <property type="entry name" value="AN1-like Zinc finger"/>
    <property type="match status" value="1"/>
</dbReference>
<dbReference type="InterPro" id="IPR035896">
    <property type="entry name" value="AN1-like_Znf"/>
</dbReference>
<dbReference type="InterPro" id="IPR050652">
    <property type="entry name" value="AN1_A20_ZnFinger"/>
</dbReference>
<dbReference type="InterPro" id="IPR002653">
    <property type="entry name" value="Znf_A20"/>
</dbReference>
<dbReference type="InterPro" id="IPR000058">
    <property type="entry name" value="Znf_AN1"/>
</dbReference>
<dbReference type="PANTHER" id="PTHR10634">
    <property type="entry name" value="AN1-TYPE ZINC FINGER PROTEIN"/>
    <property type="match status" value="1"/>
</dbReference>
<dbReference type="PANTHER" id="PTHR10634:SF98">
    <property type="entry name" value="ZINC FINGER A20 AND AN1 DOMAIN-CONTAINING STRESS-ASSOCIATED PROTEIN 3"/>
    <property type="match status" value="1"/>
</dbReference>
<dbReference type="Pfam" id="PF01754">
    <property type="entry name" value="zf-A20"/>
    <property type="match status" value="1"/>
</dbReference>
<dbReference type="Pfam" id="PF01428">
    <property type="entry name" value="zf-AN1"/>
    <property type="match status" value="1"/>
</dbReference>
<dbReference type="SMART" id="SM00259">
    <property type="entry name" value="ZnF_A20"/>
    <property type="match status" value="1"/>
</dbReference>
<dbReference type="SMART" id="SM00154">
    <property type="entry name" value="ZnF_AN1"/>
    <property type="match status" value="1"/>
</dbReference>
<dbReference type="SUPFAM" id="SSF118310">
    <property type="entry name" value="AN1-like Zinc finger"/>
    <property type="match status" value="1"/>
</dbReference>
<dbReference type="SUPFAM" id="SSF57716">
    <property type="entry name" value="Glucocorticoid receptor-like (DNA-binding domain)"/>
    <property type="match status" value="1"/>
</dbReference>
<dbReference type="PROSITE" id="PS51036">
    <property type="entry name" value="ZF_A20"/>
    <property type="match status" value="1"/>
</dbReference>
<dbReference type="PROSITE" id="PS51039">
    <property type="entry name" value="ZF_AN1"/>
    <property type="match status" value="1"/>
</dbReference>
<evidence type="ECO:0000250" key="1"/>
<evidence type="ECO:0000255" key="2">
    <source>
        <dbReference type="PROSITE-ProRule" id="PRU00449"/>
    </source>
</evidence>
<evidence type="ECO:0000255" key="3">
    <source>
        <dbReference type="PROSITE-ProRule" id="PRU00451"/>
    </source>
</evidence>
<evidence type="ECO:0000256" key="4">
    <source>
        <dbReference type="SAM" id="MobiDB-lite"/>
    </source>
</evidence>
<accession>Q9ZNU9</accession>
<gene>
    <name type="primary">SAP3</name>
    <name type="ordered locus">At2g27580</name>
    <name type="ORF">F15K20.32</name>
</gene>
<keyword id="KW-0479">Metal-binding</keyword>
<keyword id="KW-1185">Reference proteome</keyword>
<keyword id="KW-0862">Zinc</keyword>
<keyword id="KW-0863">Zinc-finger</keyword>
<comment type="function">
    <text evidence="1">May be involved in environmental stress response.</text>
</comment>